<feature type="chain" id="PRO_0000048793" description="SRY-related protein AES6">
    <location>
        <begin position="1" status="less than"/>
        <end position="72" status="greater than"/>
    </location>
</feature>
<feature type="DNA-binding region" description="HMG box" evidence="1">
    <location>
        <begin position="1"/>
        <end position="69"/>
    </location>
</feature>
<feature type="non-terminal residue">
    <location>
        <position position="1"/>
    </location>
</feature>
<feature type="non-terminal residue">
    <location>
        <position position="72"/>
    </location>
</feature>
<keyword id="KW-0238">DNA-binding</keyword>
<keyword id="KW-0539">Nucleus</keyword>
<proteinExistence type="inferred from homology"/>
<evidence type="ECO:0000255" key="1">
    <source>
        <dbReference type="PROSITE-ProRule" id="PRU00267"/>
    </source>
</evidence>
<accession>P40640</accession>
<protein>
    <recommendedName>
        <fullName>SRY-related protein AES6</fullName>
    </recommendedName>
</protein>
<reference key="1">
    <citation type="journal article" date="1993" name="PCR Methods Appl.">
        <title>PCR amplification of SRY-related gene sequences reveals evolutionary conservation of the SRY-box motif.</title>
        <authorList>
            <person name="Coriat A.M."/>
            <person name="Mueller U."/>
            <person name="Harry J.L."/>
            <person name="Uwanogho D."/>
            <person name="Sharpe P.T."/>
        </authorList>
    </citation>
    <scope>NUCLEOTIDE SEQUENCE [GENOMIC DNA]</scope>
</reference>
<organism>
    <name type="scientific">Alligator mississippiensis</name>
    <name type="common">American alligator</name>
    <dbReference type="NCBI Taxonomy" id="8496"/>
    <lineage>
        <taxon>Eukaryota</taxon>
        <taxon>Metazoa</taxon>
        <taxon>Chordata</taxon>
        <taxon>Craniata</taxon>
        <taxon>Vertebrata</taxon>
        <taxon>Euteleostomi</taxon>
        <taxon>Archelosauria</taxon>
        <taxon>Archosauria</taxon>
        <taxon>Crocodylia</taxon>
        <taxon>Alligatoridae</taxon>
        <taxon>Alligatorinae</taxon>
        <taxon>Alligator</taxon>
    </lineage>
</organism>
<sequence length="72" mass="8676">VKRPMNAFMVWSQSRAGKIMEQSPDMHNAEISKRRGKRWKLLKDSDKIPFIRAAERLRLKHMADYPDYKYRP</sequence>
<comment type="subcellular location">
    <subcellularLocation>
        <location evidence="1">Nucleus</location>
    </subcellularLocation>
</comment>
<name>AES6_ALLMI</name>
<dbReference type="EMBL" id="M86316">
    <property type="protein sequence ID" value="AAA48529.1"/>
    <property type="molecule type" value="Genomic_DNA"/>
</dbReference>
<dbReference type="PIR" id="I50025">
    <property type="entry name" value="I50025"/>
</dbReference>
<dbReference type="SMR" id="P40640"/>
<dbReference type="GO" id="GO:0005634">
    <property type="term" value="C:nucleus"/>
    <property type="evidence" value="ECO:0007669"/>
    <property type="project" value="UniProtKB-SubCell"/>
</dbReference>
<dbReference type="GO" id="GO:0001228">
    <property type="term" value="F:DNA-binding transcription activator activity, RNA polymerase II-specific"/>
    <property type="evidence" value="ECO:0007669"/>
    <property type="project" value="TreeGrafter"/>
</dbReference>
<dbReference type="GO" id="GO:0000978">
    <property type="term" value="F:RNA polymerase II cis-regulatory region sequence-specific DNA binding"/>
    <property type="evidence" value="ECO:0007669"/>
    <property type="project" value="TreeGrafter"/>
</dbReference>
<dbReference type="GO" id="GO:0007420">
    <property type="term" value="P:brain development"/>
    <property type="evidence" value="ECO:0007669"/>
    <property type="project" value="TreeGrafter"/>
</dbReference>
<dbReference type="GO" id="GO:0048593">
    <property type="term" value="P:camera-type eye morphogenesis"/>
    <property type="evidence" value="ECO:0007669"/>
    <property type="project" value="TreeGrafter"/>
</dbReference>
<dbReference type="GO" id="GO:0000122">
    <property type="term" value="P:negative regulation of transcription by RNA polymerase II"/>
    <property type="evidence" value="ECO:0007669"/>
    <property type="project" value="TreeGrafter"/>
</dbReference>
<dbReference type="GO" id="GO:0030182">
    <property type="term" value="P:neuron differentiation"/>
    <property type="evidence" value="ECO:0007669"/>
    <property type="project" value="TreeGrafter"/>
</dbReference>
<dbReference type="FunFam" id="1.10.30.10:FF:000002">
    <property type="entry name" value="transcription factor Sox-2"/>
    <property type="match status" value="1"/>
</dbReference>
<dbReference type="Gene3D" id="1.10.30.10">
    <property type="entry name" value="High mobility group box domain"/>
    <property type="match status" value="1"/>
</dbReference>
<dbReference type="InterPro" id="IPR009071">
    <property type="entry name" value="HMG_box_dom"/>
</dbReference>
<dbReference type="InterPro" id="IPR036910">
    <property type="entry name" value="HMG_box_dom_sf"/>
</dbReference>
<dbReference type="InterPro" id="IPR050140">
    <property type="entry name" value="SRY-related_HMG-box_TF-like"/>
</dbReference>
<dbReference type="PANTHER" id="PTHR10270">
    <property type="entry name" value="SOX TRANSCRIPTION FACTOR"/>
    <property type="match status" value="1"/>
</dbReference>
<dbReference type="PANTHER" id="PTHR10270:SF27">
    <property type="entry name" value="TRANSCRIPTION FACTOR SOX-4"/>
    <property type="match status" value="1"/>
</dbReference>
<dbReference type="Pfam" id="PF00505">
    <property type="entry name" value="HMG_box"/>
    <property type="match status" value="1"/>
</dbReference>
<dbReference type="SMART" id="SM00398">
    <property type="entry name" value="HMG"/>
    <property type="match status" value="1"/>
</dbReference>
<dbReference type="SUPFAM" id="SSF47095">
    <property type="entry name" value="HMG-box"/>
    <property type="match status" value="1"/>
</dbReference>
<dbReference type="PROSITE" id="PS50118">
    <property type="entry name" value="HMG_BOX_2"/>
    <property type="match status" value="1"/>
</dbReference>